<name>SYE2_RICAH</name>
<comment type="function">
    <text evidence="1">Catalyzes the attachment of glutamate to tRNA(Glu) in a two-step reaction: glutamate is first activated by ATP to form Glu-AMP and then transferred to the acceptor end of tRNA(Glu).</text>
</comment>
<comment type="catalytic activity">
    <reaction evidence="1">
        <text>tRNA(Glu) + L-glutamate + ATP = L-glutamyl-tRNA(Glu) + AMP + diphosphate</text>
        <dbReference type="Rhea" id="RHEA:23540"/>
        <dbReference type="Rhea" id="RHEA-COMP:9663"/>
        <dbReference type="Rhea" id="RHEA-COMP:9680"/>
        <dbReference type="ChEBI" id="CHEBI:29985"/>
        <dbReference type="ChEBI" id="CHEBI:30616"/>
        <dbReference type="ChEBI" id="CHEBI:33019"/>
        <dbReference type="ChEBI" id="CHEBI:78442"/>
        <dbReference type="ChEBI" id="CHEBI:78520"/>
        <dbReference type="ChEBI" id="CHEBI:456215"/>
        <dbReference type="EC" id="6.1.1.17"/>
    </reaction>
</comment>
<comment type="subunit">
    <text evidence="1">Monomer.</text>
</comment>
<comment type="subcellular location">
    <subcellularLocation>
        <location evidence="1">Cytoplasm</location>
    </subcellularLocation>
</comment>
<comment type="similarity">
    <text evidence="1">Belongs to the class-I aminoacyl-tRNA synthetase family. Glutamate--tRNA ligase type 1 subfamily.</text>
</comment>
<sequence>MTNVITRFAPSPTGFLHIGSARTALFNYLFARHNNGKFLLRIEDTDKERSTKAAVDAIFSGLKWLGLDWDAEVIFQSKRNDLYKKAALRLLKEGKAYYCFTSQEEIEKQRQKALENKQHFIFNSEWRDKEPDAYPTDVKPVIRLKTPREGRITIHDTLQGEVVIENSHIDDMVLLRADGTATYMLAVVADDHDMGITHIIRGDDHLTNAARQIAIYQALGYEVPSMTHIPLIHGADGAKLSKRHGALGVDAYKNMGYLPESLCNYLLRLGWSHGNDEIISMTQAIEWFNLDSLGKSPSRLDFAKMNSLNAYYLRMLDNDTLTAKTVEILKQNYKISDKEVSYIKQAMSSLLVRSETLLDLAQLAQIYLVDSPIVYNQDAKEIIENCNKDLIKQVTEGLNKIEKFDKESVQNKFKEIAAANDLKLSDIMKPVRALITGMDASPSVFAIAEILGKENILKRLETI</sequence>
<proteinExistence type="inferred from homology"/>
<reference key="1">
    <citation type="submission" date="2007-09" db="EMBL/GenBank/DDBJ databases">
        <title>Complete genome sequence of Rickettsia akari.</title>
        <authorList>
            <person name="Madan A."/>
            <person name="Fahey J."/>
            <person name="Helton E."/>
            <person name="Ketteman M."/>
            <person name="Madan A."/>
            <person name="Rodrigues S."/>
            <person name="Sanchez A."/>
            <person name="Whiting M."/>
            <person name="Dasch G."/>
            <person name="Eremeeva M."/>
        </authorList>
    </citation>
    <scope>NUCLEOTIDE SEQUENCE [LARGE SCALE GENOMIC DNA]</scope>
    <source>
        <strain>Hartford</strain>
    </source>
</reference>
<gene>
    <name evidence="1" type="primary">gltX2</name>
    <name type="ordered locus">A1C_04895</name>
</gene>
<protein>
    <recommendedName>
        <fullName evidence="1">Glutamate--tRNA ligase 2</fullName>
        <ecNumber evidence="1">6.1.1.17</ecNumber>
    </recommendedName>
    <alternativeName>
        <fullName evidence="1">Glutamyl-tRNA synthetase 2</fullName>
        <shortName evidence="1">GluRS 2</shortName>
    </alternativeName>
</protein>
<dbReference type="EC" id="6.1.1.17" evidence="1"/>
<dbReference type="EMBL" id="CP000847">
    <property type="protein sequence ID" value="ABV75237.1"/>
    <property type="molecule type" value="Genomic_DNA"/>
</dbReference>
<dbReference type="RefSeq" id="WP_012149867.1">
    <property type="nucleotide sequence ID" value="NC_009881.1"/>
</dbReference>
<dbReference type="SMR" id="A8GPB2"/>
<dbReference type="STRING" id="293614.A1C_04895"/>
<dbReference type="KEGG" id="rak:A1C_04895"/>
<dbReference type="eggNOG" id="COG0008">
    <property type="taxonomic scope" value="Bacteria"/>
</dbReference>
<dbReference type="HOGENOM" id="CLU_015768_6_3_5"/>
<dbReference type="Proteomes" id="UP000006830">
    <property type="component" value="Chromosome"/>
</dbReference>
<dbReference type="GO" id="GO:0005829">
    <property type="term" value="C:cytosol"/>
    <property type="evidence" value="ECO:0007669"/>
    <property type="project" value="TreeGrafter"/>
</dbReference>
<dbReference type="GO" id="GO:0005524">
    <property type="term" value="F:ATP binding"/>
    <property type="evidence" value="ECO:0007669"/>
    <property type="project" value="UniProtKB-UniRule"/>
</dbReference>
<dbReference type="GO" id="GO:0004818">
    <property type="term" value="F:glutamate-tRNA ligase activity"/>
    <property type="evidence" value="ECO:0007669"/>
    <property type="project" value="UniProtKB-UniRule"/>
</dbReference>
<dbReference type="GO" id="GO:0000049">
    <property type="term" value="F:tRNA binding"/>
    <property type="evidence" value="ECO:0007669"/>
    <property type="project" value="InterPro"/>
</dbReference>
<dbReference type="GO" id="GO:0008270">
    <property type="term" value="F:zinc ion binding"/>
    <property type="evidence" value="ECO:0007669"/>
    <property type="project" value="InterPro"/>
</dbReference>
<dbReference type="GO" id="GO:0006424">
    <property type="term" value="P:glutamyl-tRNA aminoacylation"/>
    <property type="evidence" value="ECO:0007669"/>
    <property type="project" value="UniProtKB-UniRule"/>
</dbReference>
<dbReference type="CDD" id="cd00808">
    <property type="entry name" value="GluRS_core"/>
    <property type="match status" value="1"/>
</dbReference>
<dbReference type="FunFam" id="3.40.50.620:FF:000007">
    <property type="entry name" value="Glutamate--tRNA ligase"/>
    <property type="match status" value="1"/>
</dbReference>
<dbReference type="Gene3D" id="1.10.10.350">
    <property type="match status" value="1"/>
</dbReference>
<dbReference type="Gene3D" id="3.40.50.620">
    <property type="entry name" value="HUPs"/>
    <property type="match status" value="1"/>
</dbReference>
<dbReference type="HAMAP" id="MF_00022">
    <property type="entry name" value="Glu_tRNA_synth_type1"/>
    <property type="match status" value="1"/>
</dbReference>
<dbReference type="InterPro" id="IPR045462">
    <property type="entry name" value="aa-tRNA-synth_I_cd-bd"/>
</dbReference>
<dbReference type="InterPro" id="IPR020751">
    <property type="entry name" value="aa-tRNA-synth_I_codon-bd_sub2"/>
</dbReference>
<dbReference type="InterPro" id="IPR008925">
    <property type="entry name" value="aa_tRNA-synth_I_cd-bd_sf"/>
</dbReference>
<dbReference type="InterPro" id="IPR004527">
    <property type="entry name" value="Glu-tRNA-ligase_bac/mito"/>
</dbReference>
<dbReference type="InterPro" id="IPR000924">
    <property type="entry name" value="Glu/Gln-tRNA-synth"/>
</dbReference>
<dbReference type="InterPro" id="IPR020058">
    <property type="entry name" value="Glu/Gln-tRNA-synth_Ib_cat-dom"/>
</dbReference>
<dbReference type="InterPro" id="IPR049940">
    <property type="entry name" value="GluQ/Sye"/>
</dbReference>
<dbReference type="InterPro" id="IPR033910">
    <property type="entry name" value="GluRS_core"/>
</dbReference>
<dbReference type="InterPro" id="IPR014729">
    <property type="entry name" value="Rossmann-like_a/b/a_fold"/>
</dbReference>
<dbReference type="NCBIfam" id="TIGR00464">
    <property type="entry name" value="gltX_bact"/>
    <property type="match status" value="1"/>
</dbReference>
<dbReference type="PANTHER" id="PTHR43311">
    <property type="entry name" value="GLUTAMATE--TRNA LIGASE"/>
    <property type="match status" value="1"/>
</dbReference>
<dbReference type="PANTHER" id="PTHR43311:SF2">
    <property type="entry name" value="GLUTAMATE--TRNA LIGASE, MITOCHONDRIAL-RELATED"/>
    <property type="match status" value="1"/>
</dbReference>
<dbReference type="Pfam" id="PF19269">
    <property type="entry name" value="Anticodon_2"/>
    <property type="match status" value="1"/>
</dbReference>
<dbReference type="Pfam" id="PF00749">
    <property type="entry name" value="tRNA-synt_1c"/>
    <property type="match status" value="1"/>
</dbReference>
<dbReference type="PRINTS" id="PR00987">
    <property type="entry name" value="TRNASYNTHGLU"/>
</dbReference>
<dbReference type="SUPFAM" id="SSF48163">
    <property type="entry name" value="An anticodon-binding domain of class I aminoacyl-tRNA synthetases"/>
    <property type="match status" value="1"/>
</dbReference>
<dbReference type="SUPFAM" id="SSF52374">
    <property type="entry name" value="Nucleotidylyl transferase"/>
    <property type="match status" value="1"/>
</dbReference>
<accession>A8GPB2</accession>
<evidence type="ECO:0000255" key="1">
    <source>
        <dbReference type="HAMAP-Rule" id="MF_00022"/>
    </source>
</evidence>
<feature type="chain" id="PRO_0000367753" description="Glutamate--tRNA ligase 2">
    <location>
        <begin position="1"/>
        <end position="463"/>
    </location>
</feature>
<feature type="short sequence motif" description="'HIGH' region" evidence="1">
    <location>
        <begin position="10"/>
        <end position="20"/>
    </location>
</feature>
<feature type="short sequence motif" description="'KMSKS' region" evidence="1">
    <location>
        <begin position="239"/>
        <end position="243"/>
    </location>
</feature>
<feature type="binding site" evidence="1">
    <location>
        <position position="242"/>
    </location>
    <ligand>
        <name>ATP</name>
        <dbReference type="ChEBI" id="CHEBI:30616"/>
    </ligand>
</feature>
<organism>
    <name type="scientific">Rickettsia akari (strain Hartford)</name>
    <dbReference type="NCBI Taxonomy" id="293614"/>
    <lineage>
        <taxon>Bacteria</taxon>
        <taxon>Pseudomonadati</taxon>
        <taxon>Pseudomonadota</taxon>
        <taxon>Alphaproteobacteria</taxon>
        <taxon>Rickettsiales</taxon>
        <taxon>Rickettsiaceae</taxon>
        <taxon>Rickettsieae</taxon>
        <taxon>Rickettsia</taxon>
        <taxon>spotted fever group</taxon>
    </lineage>
</organism>
<keyword id="KW-0030">Aminoacyl-tRNA synthetase</keyword>
<keyword id="KW-0067">ATP-binding</keyword>
<keyword id="KW-0963">Cytoplasm</keyword>
<keyword id="KW-0436">Ligase</keyword>
<keyword id="KW-0547">Nucleotide-binding</keyword>
<keyword id="KW-0648">Protein biosynthesis</keyword>